<organism>
    <name type="scientific">Mus musculus</name>
    <name type="common">Mouse</name>
    <dbReference type="NCBI Taxonomy" id="10090"/>
    <lineage>
        <taxon>Eukaryota</taxon>
        <taxon>Metazoa</taxon>
        <taxon>Chordata</taxon>
        <taxon>Craniata</taxon>
        <taxon>Vertebrata</taxon>
        <taxon>Euteleostomi</taxon>
        <taxon>Mammalia</taxon>
        <taxon>Eutheria</taxon>
        <taxon>Euarchontoglires</taxon>
        <taxon>Glires</taxon>
        <taxon>Rodentia</taxon>
        <taxon>Myomorpha</taxon>
        <taxon>Muroidea</taxon>
        <taxon>Muridae</taxon>
        <taxon>Murinae</taxon>
        <taxon>Mus</taxon>
        <taxon>Mus</taxon>
    </lineage>
</organism>
<reference key="1">
    <citation type="journal article" date="2002" name="J. Biol. Chem.">
        <title>Molecular cloning and functional identification of mouse vesicular glutamate transporter 3 and its expression in subsets of novel excitatory neurons.</title>
        <authorList>
            <person name="Schaefer M.K.-H."/>
            <person name="Varoqui H."/>
            <person name="Defamie N."/>
            <person name="Weihe E."/>
            <person name="Erickson J.D."/>
        </authorList>
    </citation>
    <scope>NUCLEOTIDE SEQUENCE [MRNA]</scope>
    <scope>FUNCTION</scope>
    <scope>TRANSPORTER ACTIVITY</scope>
    <scope>BIOPHYSICOCHEMICAL PROPERTIES</scope>
    <scope>SUBCELLULAR LOCATION</scope>
    <scope>TISSUE SPECIFICITY</scope>
    <scope>DEVELOPMENTAL STAGE</scope>
    <source>
        <strain>C57BL/6J</strain>
        <tissue>Brain</tissue>
    </source>
</reference>
<reference key="2">
    <citation type="journal article" date="2004" name="Genome Res.">
        <title>The status, quality, and expansion of the NIH full-length cDNA project: the Mammalian Gene Collection (MGC).</title>
        <authorList>
            <consortium name="The MGC Project Team"/>
        </authorList>
    </citation>
    <scope>NUCLEOTIDE SEQUENCE [LARGE SCALE MRNA]</scope>
    <source>
        <tissue>Eye</tissue>
    </source>
</reference>
<reference key="3">
    <citation type="journal article" date="2008" name="Am. J. Hum. Genet.">
        <title>Impairment of SLC17A8 encoding vesicular glutamate transporter-3, VGLUT3, underlies nonsyndromic deafness DFNA25 and inner hair cell dysfunction in null mice.</title>
        <authorList>
            <person name="Ruel J."/>
            <person name="Emery S."/>
            <person name="Nouvian R."/>
            <person name="Bersot T."/>
            <person name="Amilhon B."/>
            <person name="Van Rybroek J.M."/>
            <person name="Rebillard G."/>
            <person name="Lenoir M."/>
            <person name="Eybalin M."/>
            <person name="Delprat B."/>
            <person name="Sivakumaran T.A."/>
            <person name="Giros B."/>
            <person name="El Mestikawy S."/>
            <person name="Moser T."/>
            <person name="Smith R.J.H."/>
            <person name="Lesperance M.M."/>
            <person name="Puel J.-L."/>
        </authorList>
    </citation>
    <scope>DISRUPTION PHENOTYPE</scope>
</reference>
<reference key="4">
    <citation type="journal article" date="2008" name="Nat. Neurosci.">
        <title>The vesicular glutamate transporter VGLUT3 synergizes striatal acetylcholine tone.</title>
        <authorList>
            <person name="Gras C."/>
            <person name="Amilhon B."/>
            <person name="Lepicard E.M."/>
            <person name="Poirel O."/>
            <person name="Vinatier J."/>
            <person name="Herbin M."/>
            <person name="Dumas S."/>
            <person name="Tzavara E.T."/>
            <person name="Wade M.R."/>
            <person name="Nomikos G.G."/>
            <person name="Hanoun N."/>
            <person name="Saurini F."/>
            <person name="Kemel M.-L."/>
            <person name="Gasnier B."/>
            <person name="Giros B."/>
            <person name="Mestikawy S.E."/>
        </authorList>
    </citation>
    <scope>FUNCTION</scope>
    <scope>DISRUPTION PHENOTYPE</scope>
</reference>
<reference key="5">
    <citation type="journal article" date="2008" name="Neurochem. Res.">
        <title>Analysis of a vesicular glutamate transporter (VGLUT2) supports a cell-leakage mode in addition to vesicular packaging.</title>
        <authorList>
            <person name="Mackenzie B."/>
            <person name="Illing A.C."/>
            <person name="Morris M.E.K."/>
            <person name="Varoqui H."/>
            <person name="Erickson J.D."/>
        </authorList>
    </citation>
    <scope>FUNCTION</scope>
    <scope>TRANSPORTER ACTIVITY</scope>
</reference>
<reference key="6">
    <citation type="journal article" date="2008" name="Neuron">
        <title>Sensorineural deafness and seizures in mice lacking vesicular glutamate transporter 3.</title>
        <authorList>
            <person name="Seal R.P."/>
            <person name="Akil O."/>
            <person name="Yi E."/>
            <person name="Weber C.M."/>
            <person name="Grant L."/>
            <person name="Yoo J."/>
            <person name="Clause A."/>
            <person name="Kandler K."/>
            <person name="Noebels J.L."/>
            <person name="Glowatzki E."/>
            <person name="Lustig L.R."/>
            <person name="Edwards R.H."/>
        </authorList>
    </citation>
    <scope>FUNCTION</scope>
    <scope>DISRUPTION PHENOTYPE</scope>
    <scope>TISSUE SPECIFICITY</scope>
    <scope>DEVELOPMENTAL STAGE</scope>
</reference>
<gene>
    <name evidence="12" type="primary">Slc17a8</name>
    <name type="synonym">Vglut3</name>
</gene>
<dbReference type="EMBL" id="AF510321">
    <property type="protein sequence ID" value="AAN74643.1"/>
    <property type="molecule type" value="mRNA"/>
</dbReference>
<dbReference type="EMBL" id="BC042593">
    <property type="protein sequence ID" value="AAH42593.1"/>
    <property type="molecule type" value="mRNA"/>
</dbReference>
<dbReference type="CCDS" id="CCDS24117.1"/>
<dbReference type="RefSeq" id="NP_892004.1">
    <property type="nucleotide sequence ID" value="NM_182959.3"/>
</dbReference>
<dbReference type="SMR" id="Q8BFU8"/>
<dbReference type="FunCoup" id="Q8BFU8">
    <property type="interactions" value="323"/>
</dbReference>
<dbReference type="STRING" id="10090.ENSMUSP00000020102"/>
<dbReference type="TCDB" id="2.A.1.14.23">
    <property type="family name" value="the major facilitator superfamily (mfs)"/>
</dbReference>
<dbReference type="GlyCosmos" id="Q8BFU8">
    <property type="glycosylation" value="1 site, No reported glycans"/>
</dbReference>
<dbReference type="GlyGen" id="Q8BFU8">
    <property type="glycosylation" value="3 sites, 1 O-linked glycan (2 sites)"/>
</dbReference>
<dbReference type="SwissPalm" id="Q8BFU8"/>
<dbReference type="PaxDb" id="10090-ENSMUSP00000020102"/>
<dbReference type="ProteomicsDB" id="300167"/>
<dbReference type="ABCD" id="Q8BFU8">
    <property type="antibodies" value="1 sequenced antibody"/>
</dbReference>
<dbReference type="Antibodypedia" id="57947">
    <property type="antibodies" value="98 antibodies from 16 providers"/>
</dbReference>
<dbReference type="DNASU" id="216227"/>
<dbReference type="Ensembl" id="ENSMUST00000020102.14">
    <property type="protein sequence ID" value="ENSMUSP00000020102.8"/>
    <property type="gene ID" value="ENSMUSG00000019935.17"/>
</dbReference>
<dbReference type="GeneID" id="216227"/>
<dbReference type="KEGG" id="mmu:216227"/>
<dbReference type="UCSC" id="uc007gsj.1">
    <property type="organism name" value="mouse"/>
</dbReference>
<dbReference type="AGR" id="MGI:3039629"/>
<dbReference type="CTD" id="246213"/>
<dbReference type="MGI" id="MGI:3039629">
    <property type="gene designation" value="Slc17a8"/>
</dbReference>
<dbReference type="VEuPathDB" id="HostDB:ENSMUSG00000019935"/>
<dbReference type="eggNOG" id="KOG2532">
    <property type="taxonomic scope" value="Eukaryota"/>
</dbReference>
<dbReference type="GeneTree" id="ENSGT00940000158187"/>
<dbReference type="InParanoid" id="Q8BFU8"/>
<dbReference type="OMA" id="VTTIFWN"/>
<dbReference type="OrthoDB" id="2985014at2759"/>
<dbReference type="PhylomeDB" id="Q8BFU8"/>
<dbReference type="TreeFam" id="TF313535"/>
<dbReference type="Reactome" id="R-MMU-428643">
    <property type="pathway name" value="Organic anion transporters"/>
</dbReference>
<dbReference type="BioGRID-ORCS" id="216227">
    <property type="hits" value="2 hits in 78 CRISPR screens"/>
</dbReference>
<dbReference type="PRO" id="PR:Q8BFU8"/>
<dbReference type="Proteomes" id="UP000000589">
    <property type="component" value="Chromosome 10"/>
</dbReference>
<dbReference type="RNAct" id="Q8BFU8">
    <property type="molecule type" value="protein"/>
</dbReference>
<dbReference type="Bgee" id="ENSMUSG00000019935">
    <property type="expression patterns" value="Expressed in spiral organ of cochlea and 42 other cell types or tissues"/>
</dbReference>
<dbReference type="ExpressionAtlas" id="Q8BFU8">
    <property type="expression patterns" value="baseline and differential"/>
</dbReference>
<dbReference type="GO" id="GO:0097440">
    <property type="term" value="C:apical dendrite"/>
    <property type="evidence" value="ECO:0007669"/>
    <property type="project" value="Ensembl"/>
</dbReference>
<dbReference type="GO" id="GO:0043679">
    <property type="term" value="C:axon terminus"/>
    <property type="evidence" value="ECO:0007669"/>
    <property type="project" value="Ensembl"/>
</dbReference>
<dbReference type="GO" id="GO:0097441">
    <property type="term" value="C:basal dendrite"/>
    <property type="evidence" value="ECO:0007669"/>
    <property type="project" value="Ensembl"/>
</dbReference>
<dbReference type="GO" id="GO:0034707">
    <property type="term" value="C:chloride channel complex"/>
    <property type="evidence" value="ECO:0007669"/>
    <property type="project" value="UniProtKB-KW"/>
</dbReference>
<dbReference type="GO" id="GO:0060203">
    <property type="term" value="C:clathrin-sculpted glutamate transport vesicle membrane"/>
    <property type="evidence" value="ECO:0000304"/>
    <property type="project" value="Reactome"/>
</dbReference>
<dbReference type="GO" id="GO:0060076">
    <property type="term" value="C:excitatory synapse"/>
    <property type="evidence" value="ECO:0007669"/>
    <property type="project" value="Ensembl"/>
</dbReference>
<dbReference type="GO" id="GO:0097451">
    <property type="term" value="C:glial limiting end-foot"/>
    <property type="evidence" value="ECO:0007669"/>
    <property type="project" value="Ensembl"/>
</dbReference>
<dbReference type="GO" id="GO:0098978">
    <property type="term" value="C:glutamatergic synapse"/>
    <property type="evidence" value="ECO:0000314"/>
    <property type="project" value="SynGO"/>
</dbReference>
<dbReference type="GO" id="GO:0005771">
    <property type="term" value="C:multivesicular body"/>
    <property type="evidence" value="ECO:0007669"/>
    <property type="project" value="Ensembl"/>
</dbReference>
<dbReference type="GO" id="GO:1990030">
    <property type="term" value="C:pericellular basket"/>
    <property type="evidence" value="ECO:0007669"/>
    <property type="project" value="Ensembl"/>
</dbReference>
<dbReference type="GO" id="GO:0043204">
    <property type="term" value="C:perikaryon"/>
    <property type="evidence" value="ECO:0007669"/>
    <property type="project" value="Ensembl"/>
</dbReference>
<dbReference type="GO" id="GO:0005886">
    <property type="term" value="C:plasma membrane"/>
    <property type="evidence" value="ECO:0007669"/>
    <property type="project" value="UniProtKB-SubCell"/>
</dbReference>
<dbReference type="GO" id="GO:0008021">
    <property type="term" value="C:synaptic vesicle"/>
    <property type="evidence" value="ECO:0000314"/>
    <property type="project" value="MGI"/>
</dbReference>
<dbReference type="GO" id="GO:0030672">
    <property type="term" value="C:synaptic vesicle membrane"/>
    <property type="evidence" value="ECO:0000314"/>
    <property type="project" value="MGI"/>
</dbReference>
<dbReference type="GO" id="GO:0005254">
    <property type="term" value="F:chloride channel activity"/>
    <property type="evidence" value="ECO:0000250"/>
    <property type="project" value="UniProtKB"/>
</dbReference>
<dbReference type="GO" id="GO:0140788">
    <property type="term" value="F:L-glutamate uniporter activity"/>
    <property type="evidence" value="ECO:0000314"/>
    <property type="project" value="UniProtKB"/>
</dbReference>
<dbReference type="GO" id="GO:0005436">
    <property type="term" value="F:sodium:phosphate symporter activity"/>
    <property type="evidence" value="ECO:0000250"/>
    <property type="project" value="UniProtKB"/>
</dbReference>
<dbReference type="GO" id="GO:0090102">
    <property type="term" value="P:cochlea development"/>
    <property type="evidence" value="ECO:0007669"/>
    <property type="project" value="Ensembl"/>
</dbReference>
<dbReference type="GO" id="GO:0051938">
    <property type="term" value="P:L-glutamate import"/>
    <property type="evidence" value="ECO:0000250"/>
    <property type="project" value="UniProtKB"/>
</dbReference>
<dbReference type="GO" id="GO:0015813">
    <property type="term" value="P:L-glutamate transmembrane transport"/>
    <property type="evidence" value="ECO:0000314"/>
    <property type="project" value="UniProtKB"/>
</dbReference>
<dbReference type="GO" id="GO:0003407">
    <property type="term" value="P:neural retina development"/>
    <property type="evidence" value="ECO:0007669"/>
    <property type="project" value="Ensembl"/>
</dbReference>
<dbReference type="GO" id="GO:0098700">
    <property type="term" value="P:neurotransmitter loading into synaptic vesicle"/>
    <property type="evidence" value="ECO:0007669"/>
    <property type="project" value="Ensembl"/>
</dbReference>
<dbReference type="GO" id="GO:0055062">
    <property type="term" value="P:phosphate ion homeostasis"/>
    <property type="evidence" value="ECO:0000250"/>
    <property type="project" value="UniProtKB"/>
</dbReference>
<dbReference type="GO" id="GO:0051951">
    <property type="term" value="P:positive regulation of glutamate uptake involved in transmission of nerve impulse"/>
    <property type="evidence" value="ECO:0000315"/>
    <property type="project" value="UniProtKB"/>
</dbReference>
<dbReference type="GO" id="GO:0051631">
    <property type="term" value="P:regulation of acetylcholine uptake"/>
    <property type="evidence" value="ECO:0000315"/>
    <property type="project" value="UniProtKB"/>
</dbReference>
<dbReference type="GO" id="GO:0007605">
    <property type="term" value="P:sensory perception of sound"/>
    <property type="evidence" value="ECO:0007669"/>
    <property type="project" value="UniProtKB-KW"/>
</dbReference>
<dbReference type="GO" id="GO:0044341">
    <property type="term" value="P:sodium-dependent phosphate transport"/>
    <property type="evidence" value="ECO:0000250"/>
    <property type="project" value="UniProtKB"/>
</dbReference>
<dbReference type="CDD" id="cd17382">
    <property type="entry name" value="MFS_SLC17A6_7_8_VGluT"/>
    <property type="match status" value="1"/>
</dbReference>
<dbReference type="FunFam" id="1.20.1250.20:FF:000004">
    <property type="entry name" value="vesicular glutamate transporter 2 isoform X1"/>
    <property type="match status" value="1"/>
</dbReference>
<dbReference type="FunFam" id="1.20.1250.20:FF:000005">
    <property type="entry name" value="vesicular glutamate transporter 2 isoform X1"/>
    <property type="match status" value="1"/>
</dbReference>
<dbReference type="Gene3D" id="1.20.1250.20">
    <property type="entry name" value="MFS general substrate transporter like domains"/>
    <property type="match status" value="2"/>
</dbReference>
<dbReference type="InterPro" id="IPR011701">
    <property type="entry name" value="MFS"/>
</dbReference>
<dbReference type="InterPro" id="IPR020846">
    <property type="entry name" value="MFS_dom"/>
</dbReference>
<dbReference type="InterPro" id="IPR050382">
    <property type="entry name" value="MFS_Na/Anion_cotransporter"/>
</dbReference>
<dbReference type="InterPro" id="IPR036259">
    <property type="entry name" value="MFS_trans_sf"/>
</dbReference>
<dbReference type="PANTHER" id="PTHR11662">
    <property type="entry name" value="SOLUTE CARRIER FAMILY 17"/>
    <property type="match status" value="1"/>
</dbReference>
<dbReference type="PANTHER" id="PTHR11662:SF207">
    <property type="entry name" value="VESICULAR GLUTAMATE TRANSPORTER 3"/>
    <property type="match status" value="1"/>
</dbReference>
<dbReference type="Pfam" id="PF07690">
    <property type="entry name" value="MFS_1"/>
    <property type="match status" value="1"/>
</dbReference>
<dbReference type="SUPFAM" id="SSF103473">
    <property type="entry name" value="MFS general substrate transporter"/>
    <property type="match status" value="1"/>
</dbReference>
<dbReference type="PROSITE" id="PS50850">
    <property type="entry name" value="MFS"/>
    <property type="match status" value="1"/>
</dbReference>
<feature type="chain" id="PRO_0000331615" description="Vesicular glutamate transporter 3">
    <location>
        <begin position="1"/>
        <end position="601"/>
    </location>
</feature>
<feature type="topological domain" description="Cytoplasmic" evidence="3">
    <location>
        <begin position="1"/>
        <end position="89"/>
    </location>
</feature>
<feature type="transmembrane region" description="Helical" evidence="3">
    <location>
        <begin position="90"/>
        <end position="110"/>
    </location>
</feature>
<feature type="topological domain" description="Vesicular" evidence="3">
    <location>
        <begin position="111"/>
        <end position="143"/>
    </location>
</feature>
<feature type="transmembrane region" description="Helical" evidence="3">
    <location>
        <begin position="144"/>
        <end position="164"/>
    </location>
</feature>
<feature type="topological domain" description="Cytoplasmic" evidence="3">
    <location>
        <begin position="165"/>
        <end position="166"/>
    </location>
</feature>
<feature type="transmembrane region" description="Helical" evidence="3">
    <location>
        <begin position="167"/>
        <end position="187"/>
    </location>
</feature>
<feature type="topological domain" description="Vesicular" evidence="3">
    <location>
        <begin position="188"/>
        <end position="195"/>
    </location>
</feature>
<feature type="transmembrane region" description="Helical" evidence="3">
    <location>
        <begin position="196"/>
        <end position="216"/>
    </location>
</feature>
<feature type="topological domain" description="Cytoplasmic" evidence="3">
    <location>
        <begin position="217"/>
        <end position="234"/>
    </location>
</feature>
<feature type="transmembrane region" description="Helical" evidence="3">
    <location>
        <begin position="235"/>
        <end position="255"/>
    </location>
</feature>
<feature type="topological domain" description="Vesicular" evidence="3">
    <location>
        <begin position="256"/>
        <end position="262"/>
    </location>
</feature>
<feature type="transmembrane region" description="Helical" evidence="3">
    <location>
        <begin position="263"/>
        <end position="283"/>
    </location>
</feature>
<feature type="topological domain" description="Cytoplasmic" evidence="3">
    <location>
        <begin position="284"/>
        <end position="327"/>
    </location>
</feature>
<feature type="transmembrane region" description="Helical" evidence="3">
    <location>
        <begin position="328"/>
        <end position="348"/>
    </location>
</feature>
<feature type="topological domain" description="Vesicular" evidence="3">
    <location>
        <begin position="349"/>
        <end position="366"/>
    </location>
</feature>
<feature type="transmembrane region" description="Helical" evidence="3">
    <location>
        <begin position="367"/>
        <end position="387"/>
    </location>
</feature>
<feature type="topological domain" description="Cytoplasmic" evidence="3">
    <location>
        <begin position="388"/>
        <end position="403"/>
    </location>
</feature>
<feature type="transmembrane region" description="Helical" evidence="3">
    <location>
        <begin position="404"/>
        <end position="424"/>
    </location>
</feature>
<feature type="topological domain" description="Vesicular" evidence="3">
    <location>
        <begin position="425"/>
        <end position="426"/>
    </location>
</feature>
<feature type="transmembrane region" description="Helical" evidence="3">
    <location>
        <begin position="427"/>
        <end position="447"/>
    </location>
</feature>
<feature type="topological domain" description="Cytoplasmic" evidence="3">
    <location>
        <begin position="448"/>
        <end position="460"/>
    </location>
</feature>
<feature type="transmembrane region" description="Helical" evidence="3">
    <location>
        <begin position="461"/>
        <end position="481"/>
    </location>
</feature>
<feature type="topological domain" description="Vesicular" evidence="3">
    <location>
        <begin position="482"/>
        <end position="494"/>
    </location>
</feature>
<feature type="transmembrane region" description="Helical" evidence="3">
    <location>
        <begin position="495"/>
        <end position="515"/>
    </location>
</feature>
<feature type="topological domain" description="Cytoplasmic" evidence="3">
    <location>
        <begin position="516"/>
        <end position="598"/>
    </location>
</feature>
<feature type="region of interest" description="Disordered" evidence="4">
    <location>
        <begin position="576"/>
        <end position="601"/>
    </location>
</feature>
<feature type="glycosylation site" description="N-linked (GlcNAc...) asparagine" evidence="3">
    <location>
        <position position="119"/>
    </location>
</feature>
<comment type="function">
    <text evidence="1 2 5 6 7 8">Multifunctional transporter that transports L-glutamate as well as multiple ions such as chloride, sodium and phosphate (PubMed:12384506, PubMed:18080752, PubMed:18215623). At the synaptic vesicle membrane, mainly functions as an uniporter that mediates the uptake of L-glutamate into synaptic vesicles at presynaptic nerve terminals of excitatory neural cells (PubMed:12384506, PubMed:18080752, PubMed:18215623). The L-glutamate uniporter activity is electrogenic and is driven by the proton electrochemical gradient, mainly by the electrical gradient established by the vacuolar H(+)-ATPase across the synaptic vesicle membrane (PubMed:12384506). In addition, functions as a chloride channel that allows a chloride permeation through the synaptic vesicle membrane that affects the proton electrochemical gradient and promotes synaptic vesicles acidification (By similarity). At the plasma membrane, following exocytosis, functions as a symporter of Na(+) and phosphate from the extracellular space to the cytoplasm allowing synaptic phosphate homeostasis regulation (By similarity). The symporter activity is electrogenic (By similarity). Moreover, operates synergistically with SLC18A3/VACHT under a constant H(+) gradient, thereby allowing striatal vesicular acetylcholine uptake (PubMed:18278042).</text>
</comment>
<comment type="catalytic activity">
    <reaction evidence="5 6">
        <text>L-glutamate(out) = L-glutamate(in)</text>
        <dbReference type="Rhea" id="RHEA:66336"/>
        <dbReference type="ChEBI" id="CHEBI:29985"/>
    </reaction>
</comment>
<comment type="catalytic activity">
    <reaction evidence="2">
        <text>3 Na(+)(out) + phosphate(out) = 3 Na(+)(in) + phosphate(in)</text>
        <dbReference type="Rhea" id="RHEA:71255"/>
        <dbReference type="ChEBI" id="CHEBI:29101"/>
        <dbReference type="ChEBI" id="CHEBI:43474"/>
    </reaction>
</comment>
<comment type="catalytic activity">
    <reaction evidence="1">
        <text>chloride(in) = chloride(out)</text>
        <dbReference type="Rhea" id="RHEA:29823"/>
        <dbReference type="ChEBI" id="CHEBI:17996"/>
    </reaction>
</comment>
<comment type="activity regulation">
    <text evidence="1">The L-glutamate uniporter activity exhibits a biphasic dependence on chloride concentration. Chloride channel activity is allosterically activated by lumenal H(+) and Cl(-) leading to synaptic vesicles acidification. The L-glutamate transport activity is allosterically activated by lumenal H(+) and Cl(-), preventing non-vesicular L-glutamate release.</text>
</comment>
<comment type="biophysicochemical properties">
    <kinetics>
        <KM evidence="5">1.3 mM for L-glutamate</KM>
    </kinetics>
</comment>
<comment type="subcellular location">
    <subcellularLocation>
        <location evidence="1">Cytoplasmic vesicle</location>
        <location evidence="1">Secretory vesicle</location>
        <location evidence="1">Synaptic vesicle membrane</location>
    </subcellularLocation>
    <subcellularLocation>
        <location evidence="2">Cell membrane</location>
        <topology evidence="2">Multi-pass membrane protein</topology>
    </subcellularLocation>
    <subcellularLocation>
        <location evidence="1">Synapse</location>
        <location evidence="1">Synaptosome</location>
    </subcellularLocation>
</comment>
<comment type="tissue specificity">
    <text evidence="5 7">Expressed in restricted areas of the brain. Highest expression is found in the neurons of the basal forebrain, the hippocampal formation, and the majority of the neurons of the mesencephalic raphe nuclei. Expressed in inner hair cells of the ear.</text>
</comment>
<comment type="developmental stage">
    <text evidence="5 7">Expression peaks at P7 in the brain. Expressed in inner hair cells from 19 dpc onwards.</text>
</comment>
<comment type="disruption phenotype">
    <text evidence="7 8 9">Mice are hyperactive and suffer from intermittent, spontaneous cortical seizures. They exhibit reduced cholinergic transmission in the ventral portion of the striatum and defective acetylcholine release. They are hypersensitive to cocaine and less prone to haloperidol-induced catalepsy.</text>
</comment>
<comment type="miscellaneous">
    <text>Mice defective in Slc17a8 are profoundly deaf owing to the absence of glutamate release from hair cells at the first synapse in the auditory pathway. They lack auditory-nerve responses to acoustic stimuli, although auditory brainstem responses could be elicited by electrical stimuli.</text>
</comment>
<comment type="similarity">
    <text evidence="11">Belongs to the major facilitator superfamily. Sodium/anion cotransporter family. VGLUT subfamily.</text>
</comment>
<accession>Q8BFU8</accession>
<proteinExistence type="evidence at protein level"/>
<keyword id="KW-1003">Cell membrane</keyword>
<keyword id="KW-0868">Chloride</keyword>
<keyword id="KW-0869">Chloride channel</keyword>
<keyword id="KW-0968">Cytoplasmic vesicle</keyword>
<keyword id="KW-0209">Deafness</keyword>
<keyword id="KW-0325">Glycoprotein</keyword>
<keyword id="KW-1009">Hearing</keyword>
<keyword id="KW-0407">Ion channel</keyword>
<keyword id="KW-0406">Ion transport</keyword>
<keyword id="KW-0472">Membrane</keyword>
<keyword id="KW-0532">Neurotransmitter transport</keyword>
<keyword id="KW-0592">Phosphate transport</keyword>
<keyword id="KW-1185">Reference proteome</keyword>
<keyword id="KW-0915">Sodium</keyword>
<keyword id="KW-0739">Sodium transport</keyword>
<keyword id="KW-0769">Symport</keyword>
<keyword id="KW-0770">Synapse</keyword>
<keyword id="KW-0771">Synaptosome</keyword>
<keyword id="KW-0812">Transmembrane</keyword>
<keyword id="KW-1133">Transmembrane helix</keyword>
<keyword id="KW-0813">Transport</keyword>
<protein>
    <recommendedName>
        <fullName evidence="10">Vesicular glutamate transporter 3</fullName>
        <shortName evidence="10">VGluT3</shortName>
    </recommendedName>
    <alternativeName>
        <fullName>Solute carrier family 17 member 8</fullName>
    </alternativeName>
</protein>
<evidence type="ECO:0000250" key="1">
    <source>
        <dbReference type="UniProtKB" id="Q7TSF2"/>
    </source>
</evidence>
<evidence type="ECO:0000250" key="2">
    <source>
        <dbReference type="UniProtKB" id="Q8NDX2"/>
    </source>
</evidence>
<evidence type="ECO:0000255" key="3"/>
<evidence type="ECO:0000256" key="4">
    <source>
        <dbReference type="SAM" id="MobiDB-lite"/>
    </source>
</evidence>
<evidence type="ECO:0000269" key="5">
    <source>
    </source>
</evidence>
<evidence type="ECO:0000269" key="6">
    <source>
    </source>
</evidence>
<evidence type="ECO:0000269" key="7">
    <source>
    </source>
</evidence>
<evidence type="ECO:0000269" key="8">
    <source>
    </source>
</evidence>
<evidence type="ECO:0000269" key="9">
    <source>
    </source>
</evidence>
<evidence type="ECO:0000303" key="10">
    <source>
    </source>
</evidence>
<evidence type="ECO:0000305" key="11"/>
<evidence type="ECO:0000312" key="12">
    <source>
        <dbReference type="MGI" id="MGI:3039629"/>
    </source>
</evidence>
<name>VGLU3_MOUSE</name>
<sequence length="601" mass="66148">MPFKAFDTFKEKILKPGKEGVKNAVGDSLGILQRKIDGTNEEEDAIELNEEGRPVQTSRAHRPVCDCSCCGIPKRYICDCSCCGIPKRYIIAVMSGLGFCISFGIRCNLGVAIVEMVNNSTVYVDGKPEIQTAQFNWDPETVGLIHGSFFWGYIVTQIPGGFISNKFAASRVFGAAIFLTSTLNMFIPSAARVHYGCVMGVRILQGLVEGVTYPACHGMWSKWAPPLERSRLATTSFCGSYAGAVVAMPLAGVLVQYIGWASVFYIYGMFGIIWYMFWLLQAYECPAAHPTISNAERTYIETSIGEGANLASLSKFNTPWRRFFTSLPVYAIIVANFCRSWTFYLLLISQPAYFEEVFGFAISKVGLLSAVPHMVMTIVVPIGGQLADYLRSRKILTTTAVRKIMNCGGFGMEATLLLVVGFSHTKGVAISFLVLAVGFSGFAISGFNVNHLDIAPRYASILMGISNGVGTLSGMVCPLIVGAMTKHKTREEWQNVFLIAALVHYSGVIFYGVFASGEKQDWADPENLSEDKCGIIDQDELAEETELNHETFVSPRKKMSYGATTQNCEVQKTEWRQQRESAFDGEEPLSYQAEGDFSETS</sequence>